<feature type="chain" id="PRO_0000318721" description="Cysteine/O-acetylserine efflux protein">
    <location>
        <begin position="1"/>
        <end position="195"/>
    </location>
</feature>
<feature type="topological domain" description="Periplasmic" evidence="2">
    <location>
        <begin position="1"/>
        <end position="7"/>
    </location>
</feature>
<feature type="transmembrane region" description="Helical" evidence="2">
    <location>
        <begin position="8"/>
        <end position="28"/>
    </location>
</feature>
<feature type="topological domain" description="Cytoplasmic" evidence="2">
    <location>
        <begin position="29"/>
        <end position="46"/>
    </location>
</feature>
<feature type="transmembrane region" description="Helical" evidence="2">
    <location>
        <begin position="47"/>
        <end position="67"/>
    </location>
</feature>
<feature type="topological domain" description="Periplasmic" evidence="2">
    <location>
        <begin position="68"/>
        <end position="69"/>
    </location>
</feature>
<feature type="transmembrane region" description="Helical" evidence="2">
    <location>
        <begin position="70"/>
        <end position="90"/>
    </location>
</feature>
<feature type="topological domain" description="Cytoplasmic" evidence="2">
    <location>
        <begin position="91"/>
        <end position="104"/>
    </location>
</feature>
<feature type="transmembrane region" description="Helical" evidence="2">
    <location>
        <begin position="105"/>
        <end position="125"/>
    </location>
</feature>
<feature type="topological domain" description="Periplasmic" evidence="2">
    <location>
        <begin position="126"/>
        <end position="141"/>
    </location>
</feature>
<feature type="transmembrane region" description="Helical" evidence="2">
    <location>
        <begin position="142"/>
        <end position="162"/>
    </location>
</feature>
<feature type="topological domain" description="Cytoplasmic" evidence="2">
    <location>
        <begin position="163"/>
        <end position="176"/>
    </location>
</feature>
<feature type="transmembrane region" description="Helical" evidence="2">
    <location>
        <begin position="177"/>
        <end position="194"/>
    </location>
</feature>
<feature type="topological domain" description="Periplasmic" evidence="1">
    <location>
        <position position="195"/>
    </location>
</feature>
<protein>
    <recommendedName>
        <fullName evidence="1">Cysteine/O-acetylserine efflux protein</fullName>
    </recommendedName>
</protein>
<sequence length="195" mass="21262">MTPTLLSAFWTYTLITAMTPGPNNILALSSATSHGFRQSTRVLAGMSLGFLIVMLLCAGISFSLAVIDPAAVHLLSWAGAAYIVWLAWKIATSPTKEDGLQAKPISFWASFALQFVNVKIILYGVTALSTFVLPQTQALSWVVGVSVLLAMIGTFGNVCWALAGHLFQRLFRQYGRQLNIVLALLLIYCAVRIFY</sequence>
<comment type="function">
    <text evidence="1">Exporter of O-acetylserine (OAS) and cysteine.</text>
</comment>
<comment type="catalytic activity">
    <reaction evidence="1">
        <text>O-acetyl-L-serine(in) = O-acetyl-L-serine(out)</text>
        <dbReference type="Rhea" id="RHEA:29659"/>
        <dbReference type="ChEBI" id="CHEBI:58340"/>
    </reaction>
    <physiologicalReaction direction="left-to-right" evidence="1">
        <dbReference type="Rhea" id="RHEA:29660"/>
    </physiologicalReaction>
</comment>
<comment type="catalytic activity">
    <reaction evidence="1">
        <text>L-cysteine(in) = L-cysteine(out)</text>
        <dbReference type="Rhea" id="RHEA:29655"/>
        <dbReference type="ChEBI" id="CHEBI:35235"/>
    </reaction>
    <physiologicalReaction direction="left-to-right" evidence="1">
        <dbReference type="Rhea" id="RHEA:29656"/>
    </physiologicalReaction>
</comment>
<comment type="subcellular location">
    <subcellularLocation>
        <location evidence="1">Cell inner membrane</location>
        <topology evidence="2">Multi-pass membrane protein</topology>
    </subcellularLocation>
</comment>
<comment type="similarity">
    <text evidence="3">Belongs to the Rht family.</text>
</comment>
<gene>
    <name type="primary">eamB</name>
    <name type="ordered locus">EcE24377A_2865</name>
</gene>
<keyword id="KW-0029">Amino-acid transport</keyword>
<keyword id="KW-0997">Cell inner membrane</keyword>
<keyword id="KW-1003">Cell membrane</keyword>
<keyword id="KW-0472">Membrane</keyword>
<keyword id="KW-1185">Reference proteome</keyword>
<keyword id="KW-0812">Transmembrane</keyword>
<keyword id="KW-1133">Transmembrane helix</keyword>
<keyword id="KW-0813">Transport</keyword>
<organism>
    <name type="scientific">Escherichia coli O139:H28 (strain E24377A / ETEC)</name>
    <dbReference type="NCBI Taxonomy" id="331111"/>
    <lineage>
        <taxon>Bacteria</taxon>
        <taxon>Pseudomonadati</taxon>
        <taxon>Pseudomonadota</taxon>
        <taxon>Gammaproteobacteria</taxon>
        <taxon>Enterobacterales</taxon>
        <taxon>Enterobacteriaceae</taxon>
        <taxon>Escherichia</taxon>
    </lineage>
</organism>
<name>EAMB_ECO24</name>
<reference key="1">
    <citation type="journal article" date="2008" name="J. Bacteriol.">
        <title>The pangenome structure of Escherichia coli: comparative genomic analysis of E. coli commensal and pathogenic isolates.</title>
        <authorList>
            <person name="Rasko D.A."/>
            <person name="Rosovitz M.J."/>
            <person name="Myers G.S.A."/>
            <person name="Mongodin E.F."/>
            <person name="Fricke W.F."/>
            <person name="Gajer P."/>
            <person name="Crabtree J."/>
            <person name="Sebaihia M."/>
            <person name="Thomson N.R."/>
            <person name="Chaudhuri R."/>
            <person name="Henderson I.R."/>
            <person name="Sperandio V."/>
            <person name="Ravel J."/>
        </authorList>
    </citation>
    <scope>NUCLEOTIDE SEQUENCE [LARGE SCALE GENOMIC DNA]</scope>
    <source>
        <strain>E24377A / ETEC</strain>
    </source>
</reference>
<accession>A7ZQ23</accession>
<dbReference type="EMBL" id="CP000800">
    <property type="protein sequence ID" value="ABV16789.1"/>
    <property type="molecule type" value="Genomic_DNA"/>
</dbReference>
<dbReference type="RefSeq" id="WP_000189206.1">
    <property type="nucleotide sequence ID" value="NC_009801.1"/>
</dbReference>
<dbReference type="GeneID" id="75206272"/>
<dbReference type="KEGG" id="ecw:EcE24377A_2865"/>
<dbReference type="HOGENOM" id="CLU_079569_1_2_6"/>
<dbReference type="Proteomes" id="UP000001122">
    <property type="component" value="Chromosome"/>
</dbReference>
<dbReference type="GO" id="GO:0005886">
    <property type="term" value="C:plasma membrane"/>
    <property type="evidence" value="ECO:0007669"/>
    <property type="project" value="UniProtKB-SubCell"/>
</dbReference>
<dbReference type="GO" id="GO:0015171">
    <property type="term" value="F:amino acid transmembrane transporter activity"/>
    <property type="evidence" value="ECO:0007669"/>
    <property type="project" value="TreeGrafter"/>
</dbReference>
<dbReference type="GO" id="GO:0033228">
    <property type="term" value="P:cysteine export across plasma membrane"/>
    <property type="evidence" value="ECO:0007669"/>
    <property type="project" value="TreeGrafter"/>
</dbReference>
<dbReference type="InterPro" id="IPR001123">
    <property type="entry name" value="LeuE-type"/>
</dbReference>
<dbReference type="NCBIfam" id="NF007653">
    <property type="entry name" value="PRK10323.1"/>
    <property type="match status" value="1"/>
</dbReference>
<dbReference type="PANTHER" id="PTHR30086">
    <property type="entry name" value="ARGININE EXPORTER PROTEIN ARGO"/>
    <property type="match status" value="1"/>
</dbReference>
<dbReference type="PANTHER" id="PTHR30086:SF20">
    <property type="entry name" value="ARGININE EXPORTER PROTEIN ARGO-RELATED"/>
    <property type="match status" value="1"/>
</dbReference>
<dbReference type="Pfam" id="PF01810">
    <property type="entry name" value="LysE"/>
    <property type="match status" value="1"/>
</dbReference>
<evidence type="ECO:0000250" key="1">
    <source>
        <dbReference type="UniProtKB" id="P38101"/>
    </source>
</evidence>
<evidence type="ECO:0000255" key="2"/>
<evidence type="ECO:0000305" key="3"/>
<proteinExistence type="inferred from homology"/>